<keyword id="KW-0028">Amino-acid biosynthesis</keyword>
<keyword id="KW-0057">Aromatic amino acid biosynthesis</keyword>
<keyword id="KW-0521">NADP</keyword>
<keyword id="KW-0560">Oxidoreductase</keyword>
<keyword id="KW-1185">Reference proteome</keyword>
<protein>
    <recommendedName>
        <fullName evidence="1">Shikimate dehydrogenase (NADP(+))</fullName>
        <shortName evidence="1">SDH</shortName>
        <ecNumber evidence="1">1.1.1.25</ecNumber>
    </recommendedName>
</protein>
<evidence type="ECO:0000255" key="1">
    <source>
        <dbReference type="HAMAP-Rule" id="MF_00222"/>
    </source>
</evidence>
<accession>Q0K6Y5</accession>
<feature type="chain" id="PRO_0000325154" description="Shikimate dehydrogenase (NADP(+))">
    <location>
        <begin position="1"/>
        <end position="295"/>
    </location>
</feature>
<feature type="active site" description="Proton acceptor" evidence="1">
    <location>
        <position position="75"/>
    </location>
</feature>
<feature type="binding site" evidence="1">
    <location>
        <begin position="24"/>
        <end position="26"/>
    </location>
    <ligand>
        <name>shikimate</name>
        <dbReference type="ChEBI" id="CHEBI:36208"/>
    </ligand>
</feature>
<feature type="binding site" evidence="1">
    <location>
        <position position="71"/>
    </location>
    <ligand>
        <name>shikimate</name>
        <dbReference type="ChEBI" id="CHEBI:36208"/>
    </ligand>
</feature>
<feature type="binding site" evidence="1">
    <location>
        <position position="87"/>
    </location>
    <ligand>
        <name>NADP(+)</name>
        <dbReference type="ChEBI" id="CHEBI:58349"/>
    </ligand>
</feature>
<feature type="binding site" evidence="1">
    <location>
        <position position="96"/>
    </location>
    <ligand>
        <name>shikimate</name>
        <dbReference type="ChEBI" id="CHEBI:36208"/>
    </ligand>
</feature>
<feature type="binding site" evidence="1">
    <location>
        <position position="111"/>
    </location>
    <ligand>
        <name>shikimate</name>
        <dbReference type="ChEBI" id="CHEBI:36208"/>
    </ligand>
</feature>
<feature type="binding site" evidence="1">
    <location>
        <begin position="136"/>
        <end position="140"/>
    </location>
    <ligand>
        <name>NADP(+)</name>
        <dbReference type="ChEBI" id="CHEBI:58349"/>
    </ligand>
</feature>
<feature type="binding site" evidence="1">
    <location>
        <begin position="160"/>
        <end position="165"/>
    </location>
    <ligand>
        <name>NADP(+)</name>
        <dbReference type="ChEBI" id="CHEBI:58349"/>
    </ligand>
</feature>
<feature type="binding site" evidence="1">
    <location>
        <position position="233"/>
    </location>
    <ligand>
        <name>NADP(+)</name>
        <dbReference type="ChEBI" id="CHEBI:58349"/>
    </ligand>
</feature>
<feature type="binding site" evidence="1">
    <location>
        <position position="235"/>
    </location>
    <ligand>
        <name>shikimate</name>
        <dbReference type="ChEBI" id="CHEBI:36208"/>
    </ligand>
</feature>
<feature type="binding site" evidence="1">
    <location>
        <position position="256"/>
    </location>
    <ligand>
        <name>NADP(+)</name>
        <dbReference type="ChEBI" id="CHEBI:58349"/>
    </ligand>
</feature>
<name>AROE_CUPNH</name>
<comment type="function">
    <text evidence="1">Involved in the biosynthesis of the chorismate, which leads to the biosynthesis of aromatic amino acids. Catalyzes the reversible NADPH linked reduction of 3-dehydroshikimate (DHSA) to yield shikimate (SA).</text>
</comment>
<comment type="catalytic activity">
    <reaction evidence="1">
        <text>shikimate + NADP(+) = 3-dehydroshikimate + NADPH + H(+)</text>
        <dbReference type="Rhea" id="RHEA:17737"/>
        <dbReference type="ChEBI" id="CHEBI:15378"/>
        <dbReference type="ChEBI" id="CHEBI:16630"/>
        <dbReference type="ChEBI" id="CHEBI:36208"/>
        <dbReference type="ChEBI" id="CHEBI:57783"/>
        <dbReference type="ChEBI" id="CHEBI:58349"/>
        <dbReference type="EC" id="1.1.1.25"/>
    </reaction>
</comment>
<comment type="pathway">
    <text evidence="1">Metabolic intermediate biosynthesis; chorismate biosynthesis; chorismate from D-erythrose 4-phosphate and phosphoenolpyruvate: step 4/7.</text>
</comment>
<comment type="subunit">
    <text evidence="1">Homodimer.</text>
</comment>
<comment type="similarity">
    <text evidence="1">Belongs to the shikimate dehydrogenase family.</text>
</comment>
<proteinExistence type="inferred from homology"/>
<dbReference type="EC" id="1.1.1.25" evidence="1"/>
<dbReference type="EMBL" id="AM260479">
    <property type="protein sequence ID" value="CAJ94236.1"/>
    <property type="molecule type" value="Genomic_DNA"/>
</dbReference>
<dbReference type="RefSeq" id="WP_010813194.1">
    <property type="nucleotide sequence ID" value="NZ_CP039287.1"/>
</dbReference>
<dbReference type="SMR" id="Q0K6Y5"/>
<dbReference type="STRING" id="381666.H16_A3161"/>
<dbReference type="KEGG" id="reh:H16_A3161"/>
<dbReference type="eggNOG" id="COG0169">
    <property type="taxonomic scope" value="Bacteria"/>
</dbReference>
<dbReference type="HOGENOM" id="CLU_044063_2_1_4"/>
<dbReference type="OrthoDB" id="9776868at2"/>
<dbReference type="UniPathway" id="UPA00053">
    <property type="reaction ID" value="UER00087"/>
</dbReference>
<dbReference type="Proteomes" id="UP000008210">
    <property type="component" value="Chromosome 1"/>
</dbReference>
<dbReference type="GO" id="GO:0005829">
    <property type="term" value="C:cytosol"/>
    <property type="evidence" value="ECO:0007669"/>
    <property type="project" value="TreeGrafter"/>
</dbReference>
<dbReference type="GO" id="GO:0050661">
    <property type="term" value="F:NADP binding"/>
    <property type="evidence" value="ECO:0007669"/>
    <property type="project" value="InterPro"/>
</dbReference>
<dbReference type="GO" id="GO:0004764">
    <property type="term" value="F:shikimate 3-dehydrogenase (NADP+) activity"/>
    <property type="evidence" value="ECO:0007669"/>
    <property type="project" value="UniProtKB-UniRule"/>
</dbReference>
<dbReference type="GO" id="GO:0008652">
    <property type="term" value="P:amino acid biosynthetic process"/>
    <property type="evidence" value="ECO:0007669"/>
    <property type="project" value="UniProtKB-KW"/>
</dbReference>
<dbReference type="GO" id="GO:0009073">
    <property type="term" value="P:aromatic amino acid family biosynthetic process"/>
    <property type="evidence" value="ECO:0007669"/>
    <property type="project" value="UniProtKB-KW"/>
</dbReference>
<dbReference type="GO" id="GO:0009423">
    <property type="term" value="P:chorismate biosynthetic process"/>
    <property type="evidence" value="ECO:0007669"/>
    <property type="project" value="UniProtKB-UniRule"/>
</dbReference>
<dbReference type="GO" id="GO:0019632">
    <property type="term" value="P:shikimate metabolic process"/>
    <property type="evidence" value="ECO:0007669"/>
    <property type="project" value="InterPro"/>
</dbReference>
<dbReference type="CDD" id="cd01065">
    <property type="entry name" value="NAD_bind_Shikimate_DH"/>
    <property type="match status" value="1"/>
</dbReference>
<dbReference type="FunFam" id="3.40.50.10860:FF:000006">
    <property type="entry name" value="Shikimate dehydrogenase (NADP(+))"/>
    <property type="match status" value="1"/>
</dbReference>
<dbReference type="Gene3D" id="3.40.50.10860">
    <property type="entry name" value="Leucine Dehydrogenase, chain A, domain 1"/>
    <property type="match status" value="1"/>
</dbReference>
<dbReference type="Gene3D" id="3.40.50.720">
    <property type="entry name" value="NAD(P)-binding Rossmann-like Domain"/>
    <property type="match status" value="1"/>
</dbReference>
<dbReference type="HAMAP" id="MF_00222">
    <property type="entry name" value="Shikimate_DH_AroE"/>
    <property type="match status" value="1"/>
</dbReference>
<dbReference type="InterPro" id="IPR046346">
    <property type="entry name" value="Aminoacid_DH-like_N_sf"/>
</dbReference>
<dbReference type="InterPro" id="IPR036291">
    <property type="entry name" value="NAD(P)-bd_dom_sf"/>
</dbReference>
<dbReference type="InterPro" id="IPR041121">
    <property type="entry name" value="SDH_C"/>
</dbReference>
<dbReference type="InterPro" id="IPR011342">
    <property type="entry name" value="Shikimate_DH"/>
</dbReference>
<dbReference type="InterPro" id="IPR013708">
    <property type="entry name" value="Shikimate_DH-bd_N"/>
</dbReference>
<dbReference type="InterPro" id="IPR022893">
    <property type="entry name" value="Shikimate_DH_fam"/>
</dbReference>
<dbReference type="InterPro" id="IPR006151">
    <property type="entry name" value="Shikm_DH/Glu-tRNA_Rdtase"/>
</dbReference>
<dbReference type="NCBIfam" id="TIGR00507">
    <property type="entry name" value="aroE"/>
    <property type="match status" value="1"/>
</dbReference>
<dbReference type="NCBIfam" id="NF001310">
    <property type="entry name" value="PRK00258.1-2"/>
    <property type="match status" value="1"/>
</dbReference>
<dbReference type="PANTHER" id="PTHR21089:SF1">
    <property type="entry name" value="BIFUNCTIONAL 3-DEHYDROQUINATE DEHYDRATASE_SHIKIMATE DEHYDROGENASE, CHLOROPLASTIC"/>
    <property type="match status" value="1"/>
</dbReference>
<dbReference type="PANTHER" id="PTHR21089">
    <property type="entry name" value="SHIKIMATE DEHYDROGENASE"/>
    <property type="match status" value="1"/>
</dbReference>
<dbReference type="Pfam" id="PF18317">
    <property type="entry name" value="SDH_C"/>
    <property type="match status" value="1"/>
</dbReference>
<dbReference type="Pfam" id="PF01488">
    <property type="entry name" value="Shikimate_DH"/>
    <property type="match status" value="1"/>
</dbReference>
<dbReference type="Pfam" id="PF08501">
    <property type="entry name" value="Shikimate_dh_N"/>
    <property type="match status" value="1"/>
</dbReference>
<dbReference type="SUPFAM" id="SSF53223">
    <property type="entry name" value="Aminoacid dehydrogenase-like, N-terminal domain"/>
    <property type="match status" value="1"/>
</dbReference>
<dbReference type="SUPFAM" id="SSF51735">
    <property type="entry name" value="NAD(P)-binding Rossmann-fold domains"/>
    <property type="match status" value="1"/>
</dbReference>
<sequence length="295" mass="31492">MTSTDSSQATSDRYVVIGNPVAHSRSPAIHAAFARQTGEAVQYDRLEAPLDGFADAVRQFFAEGGYGCNVTVPFKLEAYDLADRLTERAEAAGAVNTLWIEEGLIHGDNTDGIGLVRDIQDNLDTLIEGKRVLLLGAGGAAMGAMLPLIECRPSRIVVANRTASRASDMLEEFVEAADQYGVELWGGGLDALDGLSEDEAVDVVINASSSSLHGEVPPVPEFLLGEGVLAYDMMYGAEPTVFLQFAARCGARTSDGLGMLVEQAAEAFYIWRGVRPRTAPVLAELRAALQAERKG</sequence>
<gene>
    <name evidence="1" type="primary">aroE</name>
    <name type="ordered locus">H16_A3161</name>
</gene>
<reference key="1">
    <citation type="journal article" date="2006" name="Nat. Biotechnol.">
        <title>Genome sequence of the bioplastic-producing 'Knallgas' bacterium Ralstonia eutropha H16.</title>
        <authorList>
            <person name="Pohlmann A."/>
            <person name="Fricke W.F."/>
            <person name="Reinecke F."/>
            <person name="Kusian B."/>
            <person name="Liesegang H."/>
            <person name="Cramm R."/>
            <person name="Eitinger T."/>
            <person name="Ewering C."/>
            <person name="Poetter M."/>
            <person name="Schwartz E."/>
            <person name="Strittmatter A."/>
            <person name="Voss I."/>
            <person name="Gottschalk G."/>
            <person name="Steinbuechel A."/>
            <person name="Friedrich B."/>
            <person name="Bowien B."/>
        </authorList>
    </citation>
    <scope>NUCLEOTIDE SEQUENCE [LARGE SCALE GENOMIC DNA]</scope>
    <source>
        <strain>ATCC 17699 / DSM 428 / KCTC 22496 / NCIMB 10442 / H16 / Stanier 337</strain>
    </source>
</reference>
<organism>
    <name type="scientific">Cupriavidus necator (strain ATCC 17699 / DSM 428 / KCTC 22496 / NCIMB 10442 / H16 / Stanier 337)</name>
    <name type="common">Ralstonia eutropha</name>
    <dbReference type="NCBI Taxonomy" id="381666"/>
    <lineage>
        <taxon>Bacteria</taxon>
        <taxon>Pseudomonadati</taxon>
        <taxon>Pseudomonadota</taxon>
        <taxon>Betaproteobacteria</taxon>
        <taxon>Burkholderiales</taxon>
        <taxon>Burkholderiaceae</taxon>
        <taxon>Cupriavidus</taxon>
    </lineage>
</organism>